<proteinExistence type="inferred from homology"/>
<evidence type="ECO:0000255" key="1">
    <source>
        <dbReference type="HAMAP-Rule" id="MF_00014"/>
    </source>
</evidence>
<dbReference type="EMBL" id="CP000930">
    <property type="protein sequence ID" value="ABZ84741.1"/>
    <property type="molecule type" value="Genomic_DNA"/>
</dbReference>
<dbReference type="RefSeq" id="WP_012283241.1">
    <property type="nucleotide sequence ID" value="NC_010337.2"/>
</dbReference>
<dbReference type="SMR" id="B0TH66"/>
<dbReference type="STRING" id="498761.HM1_2185"/>
<dbReference type="KEGG" id="hmo:HM1_2185"/>
<dbReference type="eggNOG" id="COG0806">
    <property type="taxonomic scope" value="Bacteria"/>
</dbReference>
<dbReference type="HOGENOM" id="CLU_077636_1_0_9"/>
<dbReference type="OrthoDB" id="9810331at2"/>
<dbReference type="Proteomes" id="UP000008550">
    <property type="component" value="Chromosome"/>
</dbReference>
<dbReference type="GO" id="GO:0005737">
    <property type="term" value="C:cytoplasm"/>
    <property type="evidence" value="ECO:0007669"/>
    <property type="project" value="UniProtKB-SubCell"/>
</dbReference>
<dbReference type="GO" id="GO:0005840">
    <property type="term" value="C:ribosome"/>
    <property type="evidence" value="ECO:0007669"/>
    <property type="project" value="InterPro"/>
</dbReference>
<dbReference type="GO" id="GO:0043022">
    <property type="term" value="F:ribosome binding"/>
    <property type="evidence" value="ECO:0007669"/>
    <property type="project" value="InterPro"/>
</dbReference>
<dbReference type="GO" id="GO:0042274">
    <property type="term" value="P:ribosomal small subunit biogenesis"/>
    <property type="evidence" value="ECO:0007669"/>
    <property type="project" value="UniProtKB-UniRule"/>
</dbReference>
<dbReference type="GO" id="GO:0006364">
    <property type="term" value="P:rRNA processing"/>
    <property type="evidence" value="ECO:0007669"/>
    <property type="project" value="UniProtKB-UniRule"/>
</dbReference>
<dbReference type="Gene3D" id="2.30.30.240">
    <property type="entry name" value="PRC-barrel domain"/>
    <property type="match status" value="1"/>
</dbReference>
<dbReference type="Gene3D" id="2.40.30.60">
    <property type="entry name" value="RimM"/>
    <property type="match status" value="1"/>
</dbReference>
<dbReference type="HAMAP" id="MF_00014">
    <property type="entry name" value="Ribosome_mat_RimM"/>
    <property type="match status" value="1"/>
</dbReference>
<dbReference type="InterPro" id="IPR011033">
    <property type="entry name" value="PRC_barrel-like_sf"/>
</dbReference>
<dbReference type="InterPro" id="IPR056792">
    <property type="entry name" value="PRC_RimM"/>
</dbReference>
<dbReference type="InterPro" id="IPR011961">
    <property type="entry name" value="RimM"/>
</dbReference>
<dbReference type="InterPro" id="IPR002676">
    <property type="entry name" value="RimM_N"/>
</dbReference>
<dbReference type="InterPro" id="IPR036976">
    <property type="entry name" value="RimM_N_sf"/>
</dbReference>
<dbReference type="InterPro" id="IPR009000">
    <property type="entry name" value="Transl_B-barrel_sf"/>
</dbReference>
<dbReference type="NCBIfam" id="TIGR02273">
    <property type="entry name" value="16S_RimM"/>
    <property type="match status" value="1"/>
</dbReference>
<dbReference type="PANTHER" id="PTHR33692">
    <property type="entry name" value="RIBOSOME MATURATION FACTOR RIMM"/>
    <property type="match status" value="1"/>
</dbReference>
<dbReference type="PANTHER" id="PTHR33692:SF1">
    <property type="entry name" value="RIBOSOME MATURATION FACTOR RIMM"/>
    <property type="match status" value="1"/>
</dbReference>
<dbReference type="Pfam" id="PF24986">
    <property type="entry name" value="PRC_RimM"/>
    <property type="match status" value="1"/>
</dbReference>
<dbReference type="Pfam" id="PF01782">
    <property type="entry name" value="RimM"/>
    <property type="match status" value="1"/>
</dbReference>
<dbReference type="SUPFAM" id="SSF50346">
    <property type="entry name" value="PRC-barrel domain"/>
    <property type="match status" value="1"/>
</dbReference>
<dbReference type="SUPFAM" id="SSF50447">
    <property type="entry name" value="Translation proteins"/>
    <property type="match status" value="1"/>
</dbReference>
<reference key="1">
    <citation type="journal article" date="2008" name="J. Bacteriol.">
        <title>The genome of Heliobacterium modesticaldum, a phototrophic representative of the Firmicutes containing the simplest photosynthetic apparatus.</title>
        <authorList>
            <person name="Sattley W.M."/>
            <person name="Madigan M.T."/>
            <person name="Swingley W.D."/>
            <person name="Cheung P.C."/>
            <person name="Clocksin K.M."/>
            <person name="Conrad A.L."/>
            <person name="Dejesa L.C."/>
            <person name="Honchak B.M."/>
            <person name="Jung D.O."/>
            <person name="Karbach L.E."/>
            <person name="Kurdoglu A."/>
            <person name="Lahiri S."/>
            <person name="Mastrian S.D."/>
            <person name="Page L.E."/>
            <person name="Taylor H.L."/>
            <person name="Wang Z.T."/>
            <person name="Raymond J."/>
            <person name="Chen M."/>
            <person name="Blankenship R.E."/>
            <person name="Touchman J.W."/>
        </authorList>
    </citation>
    <scope>NUCLEOTIDE SEQUENCE [LARGE SCALE GENOMIC DNA]</scope>
    <source>
        <strain>ATCC 51547 / Ice1</strain>
    </source>
</reference>
<keyword id="KW-0143">Chaperone</keyword>
<keyword id="KW-0963">Cytoplasm</keyword>
<keyword id="KW-1185">Reference proteome</keyword>
<keyword id="KW-0690">Ribosome biogenesis</keyword>
<keyword id="KW-0698">rRNA processing</keyword>
<name>RIMM_HELMI</name>
<feature type="chain" id="PRO_0000351763" description="Ribosome maturation factor RimM">
    <location>
        <begin position="1"/>
        <end position="171"/>
    </location>
</feature>
<feature type="domain" description="PRC barrel" evidence="1">
    <location>
        <begin position="96"/>
        <end position="170"/>
    </location>
</feature>
<protein>
    <recommendedName>
        <fullName evidence="1">Ribosome maturation factor RimM</fullName>
    </recommendedName>
</protein>
<organism>
    <name type="scientific">Heliobacterium modesticaldum (strain ATCC 51547 / Ice1)</name>
    <dbReference type="NCBI Taxonomy" id="498761"/>
    <lineage>
        <taxon>Bacteria</taxon>
        <taxon>Bacillati</taxon>
        <taxon>Bacillota</taxon>
        <taxon>Clostridia</taxon>
        <taxon>Eubacteriales</taxon>
        <taxon>Heliobacteriaceae</taxon>
        <taxon>Heliomicrobium</taxon>
    </lineage>
</organism>
<comment type="function">
    <text evidence="1">An accessory protein needed during the final step in the assembly of 30S ribosomal subunit, possibly for assembly of the head region. Essential for efficient processing of 16S rRNA. May be needed both before and after RbfA during the maturation of 16S rRNA. It has affinity for free ribosomal 30S subunits but not for 70S ribosomes.</text>
</comment>
<comment type="subunit">
    <text evidence="1">Binds ribosomal protein uS19.</text>
</comment>
<comment type="subcellular location">
    <subcellularLocation>
        <location evidence="1">Cytoplasm</location>
    </subcellularLocation>
</comment>
<comment type="domain">
    <text evidence="1">The PRC barrel domain binds ribosomal protein uS19.</text>
</comment>
<comment type="similarity">
    <text evidence="1">Belongs to the RimM family.</text>
</comment>
<accession>B0TH66</accession>
<gene>
    <name evidence="1" type="primary">rimM</name>
    <name type="ordered locus">Helmi_21160</name>
    <name type="ORF">HM1_2185</name>
</gene>
<sequence length="171" mass="18889">MAKRVRVGQIVNTQGVRGQVRLWPLTEKPSRFNEIKRVFVEAPPQGAPEVLTITSAHPLKKLVIVSFQEISDMTQAERLKGCYLTIPVEEVPAPEPDSYYHFQLEGLSVFTEAGERLGQIEEILETGSNDVYVVRQASPPGEVLIPALKSVVLKVDLAAGTMTVRLPDGLR</sequence>